<comment type="function">
    <text evidence="1">Component of the Mediator complex, a coactivator involved in the regulated transcription of nearly all RNA polymerase II-dependent genes. Mediator functions as a bridge to convey information from gene-specific regulatory proteins to the basal RNA polymerase II transcription machinery. Mediator is recruited to promoters by direct interactions with regulatory proteins and serves as a scaffold for the assembly of a functional preinitiation complex with RNA polymerase II and the general transcription factors (By similarity).</text>
</comment>
<comment type="subunit">
    <text evidence="1">Component of the Mediator complex.</text>
</comment>
<comment type="subcellular location">
    <subcellularLocation>
        <location evidence="2">Nucleus</location>
    </subcellularLocation>
</comment>
<comment type="similarity">
    <text evidence="2">Belongs to the Mediator complex subunit 16 family.</text>
</comment>
<comment type="sequence caution" evidence="2">
    <conflict type="erroneous gene model prediction">
        <sequence resource="EMBL-CDS" id="ABN67590"/>
    </conflict>
    <text>The predicted gene PICST_61313 has been split into 2 genes: PICST_61313 and PICST_48926.</text>
</comment>
<comment type="sequence caution" evidence="2">
    <conflict type="erroneous gene model prediction">
        <sequence resource="EMBL-CDS" id="ABN67591"/>
    </conflict>
    <text>The predicted gene PICST_61313 has been split into 2 genes: PICST_61313 and PICST_48926.</text>
</comment>
<name>MED16_PICST</name>
<proteinExistence type="inferred from homology"/>
<gene>
    <name type="primary">SIN4</name>
    <name type="synonym">MED16</name>
    <name type="ORF">PICST_48926</name>
    <name type="ORF">PICST_61313</name>
</gene>
<evidence type="ECO:0000250" key="1"/>
<evidence type="ECO:0000305" key="2"/>
<sequence>MARTASGATRPSDLISWSRNGFIAYACPVQHSKDNLLLTYLENVNGNSWKLAEPQSISVKLENNFLSELALVEWSYLSTDLAISDVYGNFYILLAGIGLLEPGSEKSTVNSDSSGAASTAAASQNSPSYELTSYNHMEMIYRDIINQDPALPVNPGAAIVSFSWLNIEKVQIINKPAALVTLENQNSSNSPFVYTYGVNQFQPHGVTHPISTKQACVALRQNGQFTLYFQGEHKVEYHKTSVALSDDIVIITKASIGFTNDKQIVVTAYDSVTRNISTYSVTVDWGFLVESAKRQKVDPHYHTPKEEHKTPKLNVTRISASIPVPTFLAAAEEEGMDMDKMDVDADSEDGNQPSYQIGSLASIDIISAGAEKDSSLDILISYTFEDGSGIASSTIYRYSLSEESELISSAFGELGVRKNVTAPANSPTVQTVTLQDKLIRSGTIQSITTALSDYFILLYYLDGHVDVVDRNSMKIVNNSDDTNLPPKTISSIFDVGFNFPKIDNSSNLIMAVSPNLTSVAYADFKGGSTRLNLKVFEKEKYLGISPKELFATSVGFAFRHAYACYTNTCSDDLVALIQTEIVRLQISLQKTITDKPHNIEMIIKKFVESIVSESHKAINFQLDAFNKESVDKLLSNPPLQKLLSLQLVLGELQDKNSIVSDIAWIVLNLRSTSFGIMFSLSSIYRQISKKKPTEDSLQDSITRGECIMSLVGNVKWLIDLMVYINQELLQLSYSKQDSSNSKLTIKNSIALPIILSKVPRLFLMYALSSIGRTHEILKKLHKDLSEASKLFTPMKESLNRYFTICNNSPLTLSLFENFLRECDALITKEQSIRLAGKEKGYSLKVEQKLVCQGELTEDMEQIGKILIDRHAVNINRDMKVSDLYFYDVDWLDIGVNKRSARTSKGLSETVIYPSSQLKPKMIPRLQYSDKECIDSLRKIIISVDMNQITGKTDTSRNGTTNHKAAIANDKIAKLRKCTRCRSVSLVADPLVFDAPSTIGLWTMVFQRTCICGNAWVNCVS</sequence>
<keyword id="KW-0010">Activator</keyword>
<keyword id="KW-0539">Nucleus</keyword>
<keyword id="KW-1185">Reference proteome</keyword>
<keyword id="KW-0804">Transcription</keyword>
<keyword id="KW-0805">Transcription regulation</keyword>
<dbReference type="EMBL" id="CP000500">
    <property type="protein sequence ID" value="ABN67590.2"/>
    <property type="status" value="ALT_SEQ"/>
    <property type="molecule type" value="Genomic_DNA"/>
</dbReference>
<dbReference type="EMBL" id="CP000500">
    <property type="protein sequence ID" value="ABN67591.2"/>
    <property type="status" value="ALT_SEQ"/>
    <property type="molecule type" value="Genomic_DNA"/>
</dbReference>
<dbReference type="RefSeq" id="XP_001385619.2">
    <property type="nucleotide sequence ID" value="XM_001385582.1"/>
</dbReference>
<dbReference type="RefSeq" id="XP_001385620.2">
    <property type="nucleotide sequence ID" value="XM_001385583.1"/>
</dbReference>
<dbReference type="SMR" id="A3LY88"/>
<dbReference type="FunCoup" id="A3LY88">
    <property type="interactions" value="273"/>
</dbReference>
<dbReference type="STRING" id="322104.A3LY88"/>
<dbReference type="GeneID" id="4840400"/>
<dbReference type="GeneID" id="4840401"/>
<dbReference type="KEGG" id="pic:PICST_48926"/>
<dbReference type="KEGG" id="pic:PICST_61313"/>
<dbReference type="eggNOG" id="ENOG502QWAC">
    <property type="taxonomic scope" value="Eukaryota"/>
</dbReference>
<dbReference type="HOGENOM" id="CLU_013428_0_0_1"/>
<dbReference type="InParanoid" id="A3LY88"/>
<dbReference type="OrthoDB" id="4139168at2759"/>
<dbReference type="Proteomes" id="UP000002258">
    <property type="component" value="Chromosome 6"/>
</dbReference>
<dbReference type="GO" id="GO:0016592">
    <property type="term" value="C:mediator complex"/>
    <property type="evidence" value="ECO:0007669"/>
    <property type="project" value="InterPro"/>
</dbReference>
<dbReference type="GO" id="GO:0045893">
    <property type="term" value="P:positive regulation of DNA-templated transcription"/>
    <property type="evidence" value="ECO:0007669"/>
    <property type="project" value="TreeGrafter"/>
</dbReference>
<dbReference type="InterPro" id="IPR048338">
    <property type="entry name" value="Mediator_Med16"/>
</dbReference>
<dbReference type="InterPro" id="IPR048339">
    <property type="entry name" value="Mediator_Med16_C"/>
</dbReference>
<dbReference type="InterPro" id="IPR021665">
    <property type="entry name" value="Mediator_Med16_N"/>
</dbReference>
<dbReference type="PANTHER" id="PTHR13224:SF6">
    <property type="entry name" value="MEDIATOR OF RNA POLYMERASE II TRANSCRIPTION SUBUNIT 16"/>
    <property type="match status" value="1"/>
</dbReference>
<dbReference type="PANTHER" id="PTHR13224">
    <property type="entry name" value="THYROID HORMONE RECEPTOR-ASSOCIATED PROTEIN-RELATED"/>
    <property type="match status" value="1"/>
</dbReference>
<dbReference type="Pfam" id="PF20719">
    <property type="entry name" value="Med16_C"/>
    <property type="match status" value="1"/>
</dbReference>
<dbReference type="Pfam" id="PF11635">
    <property type="entry name" value="Med16_N"/>
    <property type="match status" value="1"/>
</dbReference>
<protein>
    <recommendedName>
        <fullName>Mediator of RNA polymerase II transcription subunit 16</fullName>
    </recommendedName>
    <alternativeName>
        <fullName>Mediator complex subunit 16</fullName>
    </alternativeName>
</protein>
<accession>A3LY88</accession>
<accession>A3LY89</accession>
<organism>
    <name type="scientific">Scheffersomyces stipitis (strain ATCC 58785 / CBS 6054 / NBRC 10063 / NRRL Y-11545)</name>
    <name type="common">Yeast</name>
    <name type="synonym">Pichia stipitis</name>
    <dbReference type="NCBI Taxonomy" id="322104"/>
    <lineage>
        <taxon>Eukaryota</taxon>
        <taxon>Fungi</taxon>
        <taxon>Dikarya</taxon>
        <taxon>Ascomycota</taxon>
        <taxon>Saccharomycotina</taxon>
        <taxon>Pichiomycetes</taxon>
        <taxon>Debaryomycetaceae</taxon>
        <taxon>Scheffersomyces</taxon>
    </lineage>
</organism>
<reference key="1">
    <citation type="journal article" date="2007" name="Nat. Biotechnol.">
        <title>Genome sequence of the lignocellulose-bioconverting and xylose-fermenting yeast Pichia stipitis.</title>
        <authorList>
            <person name="Jeffries T.W."/>
            <person name="Grigoriev I.V."/>
            <person name="Grimwood J."/>
            <person name="Laplaza J.M."/>
            <person name="Aerts A."/>
            <person name="Salamov A."/>
            <person name="Schmutz J."/>
            <person name="Lindquist E."/>
            <person name="Dehal P."/>
            <person name="Shapiro H."/>
            <person name="Jin Y.-S."/>
            <person name="Passoth V."/>
            <person name="Richardson P.M."/>
        </authorList>
    </citation>
    <scope>NUCLEOTIDE SEQUENCE [LARGE SCALE GENOMIC DNA]</scope>
    <source>
        <strain>ATCC 58785 / CBS 6054 / NBRC 10063 / NRRL Y-11545</strain>
    </source>
</reference>
<feature type="chain" id="PRO_0000307631" description="Mediator of RNA polymerase II transcription subunit 16">
    <location>
        <begin position="1"/>
        <end position="1020"/>
    </location>
</feature>